<proteinExistence type="inferred from homology"/>
<sequence>MPIFRLPREPAFPDPALAEPDGLLAVGGDLEPERLLTAYAEGIFPWFDAESPILWWSPDPRLVLDPAALHVPRSLQRTLRRGAYRVSADEAFERVIRRCAERDRPGQQGTWITGEMVDAYVRLHRLGVAHSFEAWEGDALAGGLYGVSLGAAFFGESMFADAPDASKVAFVRSVEWLRSAGVELVDCQVRTEHLVRFGAREIPRAEFLARLARALEQPTLRGRWQLGGAGPPS</sequence>
<keyword id="KW-0012">Acyltransferase</keyword>
<keyword id="KW-0963">Cytoplasm</keyword>
<keyword id="KW-0808">Transferase</keyword>
<dbReference type="EC" id="2.3.2.6" evidence="1"/>
<dbReference type="EMBL" id="CP001131">
    <property type="protein sequence ID" value="ACG72076.1"/>
    <property type="molecule type" value="Genomic_DNA"/>
</dbReference>
<dbReference type="RefSeq" id="WP_012524903.1">
    <property type="nucleotide sequence ID" value="NC_011145.1"/>
</dbReference>
<dbReference type="SMR" id="B4UEC9"/>
<dbReference type="KEGG" id="ank:AnaeK_0840"/>
<dbReference type="HOGENOM" id="CLU_075045_0_0_7"/>
<dbReference type="OrthoDB" id="9790282at2"/>
<dbReference type="Proteomes" id="UP000001871">
    <property type="component" value="Chromosome"/>
</dbReference>
<dbReference type="GO" id="GO:0005737">
    <property type="term" value="C:cytoplasm"/>
    <property type="evidence" value="ECO:0007669"/>
    <property type="project" value="UniProtKB-SubCell"/>
</dbReference>
<dbReference type="GO" id="GO:0008914">
    <property type="term" value="F:leucyl-tRNA--protein transferase activity"/>
    <property type="evidence" value="ECO:0007669"/>
    <property type="project" value="UniProtKB-UniRule"/>
</dbReference>
<dbReference type="GO" id="GO:0030163">
    <property type="term" value="P:protein catabolic process"/>
    <property type="evidence" value="ECO:0007669"/>
    <property type="project" value="UniProtKB-UniRule"/>
</dbReference>
<dbReference type="FunFam" id="3.30.70.3550:FF:000001">
    <property type="entry name" value="Leucyl/phenylalanyl-tRNA--protein transferase"/>
    <property type="match status" value="1"/>
</dbReference>
<dbReference type="FunFam" id="3.40.630.70:FF:000001">
    <property type="entry name" value="Leucyl/phenylalanyl-tRNA--protein transferase"/>
    <property type="match status" value="1"/>
</dbReference>
<dbReference type="Gene3D" id="3.40.630.70">
    <property type="entry name" value="Leucyl/phenylalanyl-tRNA-protein transferase, C-terminal domain"/>
    <property type="match status" value="1"/>
</dbReference>
<dbReference type="Gene3D" id="3.30.70.3550">
    <property type="entry name" value="Leucyl/phenylalanyl-tRNA-protein transferase, N-terminal domain"/>
    <property type="match status" value="1"/>
</dbReference>
<dbReference type="HAMAP" id="MF_00688">
    <property type="entry name" value="Leu_Phe_trans"/>
    <property type="match status" value="1"/>
</dbReference>
<dbReference type="InterPro" id="IPR016181">
    <property type="entry name" value="Acyl_CoA_acyltransferase"/>
</dbReference>
<dbReference type="InterPro" id="IPR004616">
    <property type="entry name" value="Leu/Phe-tRNA_Trfase"/>
</dbReference>
<dbReference type="InterPro" id="IPR042203">
    <property type="entry name" value="Leu/Phe-tRNA_Trfase_C"/>
</dbReference>
<dbReference type="InterPro" id="IPR042221">
    <property type="entry name" value="Leu/Phe-tRNA_Trfase_N"/>
</dbReference>
<dbReference type="NCBIfam" id="TIGR00667">
    <property type="entry name" value="aat"/>
    <property type="match status" value="1"/>
</dbReference>
<dbReference type="PANTHER" id="PTHR30098">
    <property type="entry name" value="LEUCYL/PHENYLALANYL-TRNA--PROTEIN TRANSFERASE"/>
    <property type="match status" value="1"/>
</dbReference>
<dbReference type="PANTHER" id="PTHR30098:SF2">
    <property type="entry name" value="LEUCYL_PHENYLALANYL-TRNA--PROTEIN TRANSFERASE"/>
    <property type="match status" value="1"/>
</dbReference>
<dbReference type="Pfam" id="PF03588">
    <property type="entry name" value="Leu_Phe_trans"/>
    <property type="match status" value="1"/>
</dbReference>
<dbReference type="SUPFAM" id="SSF55729">
    <property type="entry name" value="Acyl-CoA N-acyltransferases (Nat)"/>
    <property type="match status" value="1"/>
</dbReference>
<evidence type="ECO:0000255" key="1">
    <source>
        <dbReference type="HAMAP-Rule" id="MF_00688"/>
    </source>
</evidence>
<feature type="chain" id="PRO_1000131903" description="Leucyl/phenylalanyl-tRNA--protein transferase">
    <location>
        <begin position="1"/>
        <end position="233"/>
    </location>
</feature>
<comment type="function">
    <text evidence="1">Functions in the N-end rule pathway of protein degradation where it conjugates Leu, Phe and, less efficiently, Met from aminoacyl-tRNAs to the N-termini of proteins containing an N-terminal arginine or lysine.</text>
</comment>
<comment type="catalytic activity">
    <reaction evidence="1">
        <text>N-terminal L-lysyl-[protein] + L-leucyl-tRNA(Leu) = N-terminal L-leucyl-L-lysyl-[protein] + tRNA(Leu) + H(+)</text>
        <dbReference type="Rhea" id="RHEA:12340"/>
        <dbReference type="Rhea" id="RHEA-COMP:9613"/>
        <dbReference type="Rhea" id="RHEA-COMP:9622"/>
        <dbReference type="Rhea" id="RHEA-COMP:12670"/>
        <dbReference type="Rhea" id="RHEA-COMP:12671"/>
        <dbReference type="ChEBI" id="CHEBI:15378"/>
        <dbReference type="ChEBI" id="CHEBI:65249"/>
        <dbReference type="ChEBI" id="CHEBI:78442"/>
        <dbReference type="ChEBI" id="CHEBI:78494"/>
        <dbReference type="ChEBI" id="CHEBI:133043"/>
        <dbReference type="EC" id="2.3.2.6"/>
    </reaction>
</comment>
<comment type="catalytic activity">
    <reaction evidence="1">
        <text>N-terminal L-arginyl-[protein] + L-leucyl-tRNA(Leu) = N-terminal L-leucyl-L-arginyl-[protein] + tRNA(Leu) + H(+)</text>
        <dbReference type="Rhea" id="RHEA:50416"/>
        <dbReference type="Rhea" id="RHEA-COMP:9613"/>
        <dbReference type="Rhea" id="RHEA-COMP:9622"/>
        <dbReference type="Rhea" id="RHEA-COMP:12672"/>
        <dbReference type="Rhea" id="RHEA-COMP:12673"/>
        <dbReference type="ChEBI" id="CHEBI:15378"/>
        <dbReference type="ChEBI" id="CHEBI:64719"/>
        <dbReference type="ChEBI" id="CHEBI:78442"/>
        <dbReference type="ChEBI" id="CHEBI:78494"/>
        <dbReference type="ChEBI" id="CHEBI:133044"/>
        <dbReference type="EC" id="2.3.2.6"/>
    </reaction>
</comment>
<comment type="catalytic activity">
    <reaction evidence="1">
        <text>L-phenylalanyl-tRNA(Phe) + an N-terminal L-alpha-aminoacyl-[protein] = an N-terminal L-phenylalanyl-L-alpha-aminoacyl-[protein] + tRNA(Phe)</text>
        <dbReference type="Rhea" id="RHEA:43632"/>
        <dbReference type="Rhea" id="RHEA-COMP:9668"/>
        <dbReference type="Rhea" id="RHEA-COMP:9699"/>
        <dbReference type="Rhea" id="RHEA-COMP:10636"/>
        <dbReference type="Rhea" id="RHEA-COMP:10637"/>
        <dbReference type="ChEBI" id="CHEBI:78442"/>
        <dbReference type="ChEBI" id="CHEBI:78531"/>
        <dbReference type="ChEBI" id="CHEBI:78597"/>
        <dbReference type="ChEBI" id="CHEBI:83561"/>
        <dbReference type="EC" id="2.3.2.6"/>
    </reaction>
</comment>
<comment type="subcellular location">
    <subcellularLocation>
        <location evidence="1">Cytoplasm</location>
    </subcellularLocation>
</comment>
<comment type="similarity">
    <text evidence="1">Belongs to the L/F-transferase family.</text>
</comment>
<name>LFTR_ANASK</name>
<protein>
    <recommendedName>
        <fullName evidence="1">Leucyl/phenylalanyl-tRNA--protein transferase</fullName>
        <ecNumber evidence="1">2.3.2.6</ecNumber>
    </recommendedName>
    <alternativeName>
        <fullName evidence="1">L/F-transferase</fullName>
    </alternativeName>
    <alternativeName>
        <fullName evidence="1">Leucyltransferase</fullName>
    </alternativeName>
    <alternativeName>
        <fullName evidence="1">Phenyalanyltransferase</fullName>
    </alternativeName>
</protein>
<reference key="1">
    <citation type="submission" date="2008-08" db="EMBL/GenBank/DDBJ databases">
        <title>Complete sequence of Anaeromyxobacter sp. K.</title>
        <authorList>
            <consortium name="US DOE Joint Genome Institute"/>
            <person name="Lucas S."/>
            <person name="Copeland A."/>
            <person name="Lapidus A."/>
            <person name="Glavina del Rio T."/>
            <person name="Dalin E."/>
            <person name="Tice H."/>
            <person name="Bruce D."/>
            <person name="Goodwin L."/>
            <person name="Pitluck S."/>
            <person name="Saunders E."/>
            <person name="Brettin T."/>
            <person name="Detter J.C."/>
            <person name="Han C."/>
            <person name="Larimer F."/>
            <person name="Land M."/>
            <person name="Hauser L."/>
            <person name="Kyrpides N."/>
            <person name="Ovchinnikiva G."/>
            <person name="Beliaev A."/>
        </authorList>
    </citation>
    <scope>NUCLEOTIDE SEQUENCE [LARGE SCALE GENOMIC DNA]</scope>
    <source>
        <strain>K</strain>
    </source>
</reference>
<organism>
    <name type="scientific">Anaeromyxobacter sp. (strain K)</name>
    <dbReference type="NCBI Taxonomy" id="447217"/>
    <lineage>
        <taxon>Bacteria</taxon>
        <taxon>Pseudomonadati</taxon>
        <taxon>Myxococcota</taxon>
        <taxon>Myxococcia</taxon>
        <taxon>Myxococcales</taxon>
        <taxon>Cystobacterineae</taxon>
        <taxon>Anaeromyxobacteraceae</taxon>
        <taxon>Anaeromyxobacter</taxon>
    </lineage>
</organism>
<gene>
    <name evidence="1" type="primary">aat</name>
    <name type="ordered locus">AnaeK_0840</name>
</gene>
<accession>B4UEC9</accession>